<sequence>MHKIINHPLIKDKLTRMRKVSTVSTVFRTNLEELTQLMVYEATKDLELNEIEIETPVVKVAKGYKLKNKICLIPILRAGIGMVDGVKSLIPTATIGHIGLYRNEQTLKPVEYFKKFPKNISESDVIILDPMLATGGSVVEAVNIIKKYNPKSIKFVCIVAAPEGLKYVQEVHPEVDVYIAALDDKLNENGYITPGLGDAGDRIFGTK</sequence>
<keyword id="KW-0021">Allosteric enzyme</keyword>
<keyword id="KW-0328">Glycosyltransferase</keyword>
<keyword id="KW-0342">GTP-binding</keyword>
<keyword id="KW-0460">Magnesium</keyword>
<keyword id="KW-0547">Nucleotide-binding</keyword>
<keyword id="KW-0808">Transferase</keyword>
<accession>B1AIA5</accession>
<proteinExistence type="inferred from homology"/>
<dbReference type="EC" id="2.4.2.9" evidence="1"/>
<dbReference type="EMBL" id="CP000942">
    <property type="protein sequence ID" value="ACA32865.1"/>
    <property type="molecule type" value="Genomic_DNA"/>
</dbReference>
<dbReference type="RefSeq" id="WP_006688866.1">
    <property type="nucleotide sequence ID" value="NC_010503.1"/>
</dbReference>
<dbReference type="SMR" id="B1AIA5"/>
<dbReference type="GeneID" id="29672761"/>
<dbReference type="KEGG" id="upa:UPA3_0122"/>
<dbReference type="HOGENOM" id="CLU_067096_2_2_14"/>
<dbReference type="UniPathway" id="UPA00574">
    <property type="reaction ID" value="UER00636"/>
</dbReference>
<dbReference type="Proteomes" id="UP000002162">
    <property type="component" value="Chromosome"/>
</dbReference>
<dbReference type="GO" id="GO:0005525">
    <property type="term" value="F:GTP binding"/>
    <property type="evidence" value="ECO:0007669"/>
    <property type="project" value="UniProtKB-KW"/>
</dbReference>
<dbReference type="GO" id="GO:0000287">
    <property type="term" value="F:magnesium ion binding"/>
    <property type="evidence" value="ECO:0007669"/>
    <property type="project" value="UniProtKB-UniRule"/>
</dbReference>
<dbReference type="GO" id="GO:0004845">
    <property type="term" value="F:uracil phosphoribosyltransferase activity"/>
    <property type="evidence" value="ECO:0007669"/>
    <property type="project" value="UniProtKB-UniRule"/>
</dbReference>
<dbReference type="GO" id="GO:0044206">
    <property type="term" value="P:UMP salvage"/>
    <property type="evidence" value="ECO:0007669"/>
    <property type="project" value="UniProtKB-UniRule"/>
</dbReference>
<dbReference type="GO" id="GO:0006223">
    <property type="term" value="P:uracil salvage"/>
    <property type="evidence" value="ECO:0007669"/>
    <property type="project" value="InterPro"/>
</dbReference>
<dbReference type="CDD" id="cd06223">
    <property type="entry name" value="PRTases_typeI"/>
    <property type="match status" value="1"/>
</dbReference>
<dbReference type="FunFam" id="3.40.50.2020:FF:000003">
    <property type="entry name" value="Uracil phosphoribosyltransferase"/>
    <property type="match status" value="1"/>
</dbReference>
<dbReference type="Gene3D" id="3.40.50.2020">
    <property type="match status" value="1"/>
</dbReference>
<dbReference type="HAMAP" id="MF_01218_B">
    <property type="entry name" value="Upp_B"/>
    <property type="match status" value="1"/>
</dbReference>
<dbReference type="InterPro" id="IPR000836">
    <property type="entry name" value="PRibTrfase_dom"/>
</dbReference>
<dbReference type="InterPro" id="IPR029057">
    <property type="entry name" value="PRTase-like"/>
</dbReference>
<dbReference type="InterPro" id="IPR034332">
    <property type="entry name" value="Upp_B"/>
</dbReference>
<dbReference type="InterPro" id="IPR050054">
    <property type="entry name" value="UPRTase/APRTase"/>
</dbReference>
<dbReference type="InterPro" id="IPR005765">
    <property type="entry name" value="Ura_phspho_trans"/>
</dbReference>
<dbReference type="NCBIfam" id="NF001097">
    <property type="entry name" value="PRK00129.1"/>
    <property type="match status" value="1"/>
</dbReference>
<dbReference type="NCBIfam" id="TIGR01091">
    <property type="entry name" value="upp"/>
    <property type="match status" value="1"/>
</dbReference>
<dbReference type="PANTHER" id="PTHR32315">
    <property type="entry name" value="ADENINE PHOSPHORIBOSYLTRANSFERASE"/>
    <property type="match status" value="1"/>
</dbReference>
<dbReference type="PANTHER" id="PTHR32315:SF4">
    <property type="entry name" value="URACIL PHOSPHORIBOSYLTRANSFERASE, CHLOROPLASTIC"/>
    <property type="match status" value="1"/>
</dbReference>
<dbReference type="Pfam" id="PF14681">
    <property type="entry name" value="UPRTase"/>
    <property type="match status" value="1"/>
</dbReference>
<dbReference type="SUPFAM" id="SSF53271">
    <property type="entry name" value="PRTase-like"/>
    <property type="match status" value="1"/>
</dbReference>
<reference key="1">
    <citation type="submission" date="2008-02" db="EMBL/GenBank/DDBJ databases">
        <title>Genome sequence of Ureaplasma parvum serovar 3.</title>
        <authorList>
            <person name="Methe B.A."/>
            <person name="Glass J."/>
            <person name="Waites K."/>
            <person name="Shrivastava S."/>
        </authorList>
    </citation>
    <scope>NUCLEOTIDE SEQUENCE [LARGE SCALE GENOMIC DNA]</scope>
    <source>
        <strain>ATCC 27815 / 27 / NCTC 11736</strain>
    </source>
</reference>
<comment type="function">
    <text evidence="1">Catalyzes the conversion of uracil and 5-phospho-alpha-D-ribose 1-diphosphate (PRPP) to UMP and diphosphate.</text>
</comment>
<comment type="catalytic activity">
    <reaction evidence="1">
        <text>UMP + diphosphate = 5-phospho-alpha-D-ribose 1-diphosphate + uracil</text>
        <dbReference type="Rhea" id="RHEA:13017"/>
        <dbReference type="ChEBI" id="CHEBI:17568"/>
        <dbReference type="ChEBI" id="CHEBI:33019"/>
        <dbReference type="ChEBI" id="CHEBI:57865"/>
        <dbReference type="ChEBI" id="CHEBI:58017"/>
        <dbReference type="EC" id="2.4.2.9"/>
    </reaction>
</comment>
<comment type="cofactor">
    <cofactor evidence="1">
        <name>Mg(2+)</name>
        <dbReference type="ChEBI" id="CHEBI:18420"/>
    </cofactor>
    <text evidence="1">Binds 1 Mg(2+) ion per subunit. The magnesium is bound as Mg-PRPP.</text>
</comment>
<comment type="activity regulation">
    <text evidence="1">Allosterically activated by GTP.</text>
</comment>
<comment type="pathway">
    <text evidence="1">Pyrimidine metabolism; UMP biosynthesis via salvage pathway; UMP from uracil: step 1/1.</text>
</comment>
<comment type="similarity">
    <text evidence="1">Belongs to the UPRTase family.</text>
</comment>
<organism>
    <name type="scientific">Ureaplasma parvum serovar 3 (strain ATCC 27815 / 27 / NCTC 11736)</name>
    <dbReference type="NCBI Taxonomy" id="505682"/>
    <lineage>
        <taxon>Bacteria</taxon>
        <taxon>Bacillati</taxon>
        <taxon>Mycoplasmatota</taxon>
        <taxon>Mycoplasmoidales</taxon>
        <taxon>Mycoplasmoidaceae</taxon>
        <taxon>Ureaplasma</taxon>
    </lineage>
</organism>
<evidence type="ECO:0000255" key="1">
    <source>
        <dbReference type="HAMAP-Rule" id="MF_01218"/>
    </source>
</evidence>
<protein>
    <recommendedName>
        <fullName evidence="1">Uracil phosphoribosyltransferase</fullName>
        <ecNumber evidence="1">2.4.2.9</ecNumber>
    </recommendedName>
    <alternativeName>
        <fullName evidence="1">UMP pyrophosphorylase</fullName>
    </alternativeName>
    <alternativeName>
        <fullName evidence="1">UPRTase</fullName>
    </alternativeName>
</protein>
<name>UPP_UREP2</name>
<feature type="chain" id="PRO_1000085646" description="Uracil phosphoribosyltransferase">
    <location>
        <begin position="1"/>
        <end position="207"/>
    </location>
</feature>
<feature type="binding site" evidence="1">
    <location>
        <position position="77"/>
    </location>
    <ligand>
        <name>5-phospho-alpha-D-ribose 1-diphosphate</name>
        <dbReference type="ChEBI" id="CHEBI:58017"/>
    </ligand>
</feature>
<feature type="binding site" evidence="1">
    <location>
        <position position="102"/>
    </location>
    <ligand>
        <name>5-phospho-alpha-D-ribose 1-diphosphate</name>
        <dbReference type="ChEBI" id="CHEBI:58017"/>
    </ligand>
</feature>
<feature type="binding site" evidence="1">
    <location>
        <begin position="129"/>
        <end position="137"/>
    </location>
    <ligand>
        <name>5-phospho-alpha-D-ribose 1-diphosphate</name>
        <dbReference type="ChEBI" id="CHEBI:58017"/>
    </ligand>
</feature>
<feature type="binding site" evidence="1">
    <location>
        <position position="192"/>
    </location>
    <ligand>
        <name>uracil</name>
        <dbReference type="ChEBI" id="CHEBI:17568"/>
    </ligand>
</feature>
<feature type="binding site" evidence="1">
    <location>
        <begin position="197"/>
        <end position="199"/>
    </location>
    <ligand>
        <name>uracil</name>
        <dbReference type="ChEBI" id="CHEBI:17568"/>
    </ligand>
</feature>
<feature type="binding site" evidence="1">
    <location>
        <position position="198"/>
    </location>
    <ligand>
        <name>5-phospho-alpha-D-ribose 1-diphosphate</name>
        <dbReference type="ChEBI" id="CHEBI:58017"/>
    </ligand>
</feature>
<gene>
    <name evidence="1" type="primary">upp</name>
    <name type="ordered locus">UPA3_0122</name>
</gene>